<name>Y9232_DICDI</name>
<dbReference type="EMBL" id="AAFI02000175">
    <property type="protein sequence ID" value="EAL61892.1"/>
    <property type="molecule type" value="Genomic_DNA"/>
</dbReference>
<dbReference type="RefSeq" id="XP_635394.1">
    <property type="nucleotide sequence ID" value="XM_630302.1"/>
</dbReference>
<dbReference type="PaxDb" id="44689-DDB0189232"/>
<dbReference type="EnsemblProtists" id="EAL61892">
    <property type="protein sequence ID" value="EAL61892"/>
    <property type="gene ID" value="DDB_G0291089"/>
</dbReference>
<dbReference type="GeneID" id="8627978"/>
<dbReference type="KEGG" id="ddi:DDB_G0291089"/>
<dbReference type="dictyBase" id="DDB_G0291089"/>
<dbReference type="VEuPathDB" id="AmoebaDB:DDB_G0291089"/>
<dbReference type="HOGENOM" id="CLU_194866_0_0_1"/>
<dbReference type="InParanoid" id="Q54F60"/>
<dbReference type="OMA" id="YGSIEMG"/>
<dbReference type="PRO" id="PR:Q54F60"/>
<dbReference type="Proteomes" id="UP000002195">
    <property type="component" value="Chromosome 5"/>
</dbReference>
<accession>Q54F60</accession>
<reference key="1">
    <citation type="journal article" date="2005" name="Nature">
        <title>The genome of the social amoeba Dictyostelium discoideum.</title>
        <authorList>
            <person name="Eichinger L."/>
            <person name="Pachebat J.A."/>
            <person name="Gloeckner G."/>
            <person name="Rajandream M.A."/>
            <person name="Sucgang R."/>
            <person name="Berriman M."/>
            <person name="Song J."/>
            <person name="Olsen R."/>
            <person name="Szafranski K."/>
            <person name="Xu Q."/>
            <person name="Tunggal B."/>
            <person name="Kummerfeld S."/>
            <person name="Madera M."/>
            <person name="Konfortov B.A."/>
            <person name="Rivero F."/>
            <person name="Bankier A.T."/>
            <person name="Lehmann R."/>
            <person name="Hamlin N."/>
            <person name="Davies R."/>
            <person name="Gaudet P."/>
            <person name="Fey P."/>
            <person name="Pilcher K."/>
            <person name="Chen G."/>
            <person name="Saunders D."/>
            <person name="Sodergren E.J."/>
            <person name="Davis P."/>
            <person name="Kerhornou A."/>
            <person name="Nie X."/>
            <person name="Hall N."/>
            <person name="Anjard C."/>
            <person name="Hemphill L."/>
            <person name="Bason N."/>
            <person name="Farbrother P."/>
            <person name="Desany B."/>
            <person name="Just E."/>
            <person name="Morio T."/>
            <person name="Rost R."/>
            <person name="Churcher C.M."/>
            <person name="Cooper J."/>
            <person name="Haydock S."/>
            <person name="van Driessche N."/>
            <person name="Cronin A."/>
            <person name="Goodhead I."/>
            <person name="Muzny D.M."/>
            <person name="Mourier T."/>
            <person name="Pain A."/>
            <person name="Lu M."/>
            <person name="Harper D."/>
            <person name="Lindsay R."/>
            <person name="Hauser H."/>
            <person name="James K.D."/>
            <person name="Quiles M."/>
            <person name="Madan Babu M."/>
            <person name="Saito T."/>
            <person name="Buchrieser C."/>
            <person name="Wardroper A."/>
            <person name="Felder M."/>
            <person name="Thangavelu M."/>
            <person name="Johnson D."/>
            <person name="Knights A."/>
            <person name="Loulseged H."/>
            <person name="Mungall K.L."/>
            <person name="Oliver K."/>
            <person name="Price C."/>
            <person name="Quail M.A."/>
            <person name="Urushihara H."/>
            <person name="Hernandez J."/>
            <person name="Rabbinowitsch E."/>
            <person name="Steffen D."/>
            <person name="Sanders M."/>
            <person name="Ma J."/>
            <person name="Kohara Y."/>
            <person name="Sharp S."/>
            <person name="Simmonds M.N."/>
            <person name="Spiegler S."/>
            <person name="Tivey A."/>
            <person name="Sugano S."/>
            <person name="White B."/>
            <person name="Walker D."/>
            <person name="Woodward J.R."/>
            <person name="Winckler T."/>
            <person name="Tanaka Y."/>
            <person name="Shaulsky G."/>
            <person name="Schleicher M."/>
            <person name="Weinstock G.M."/>
            <person name="Rosenthal A."/>
            <person name="Cox E.C."/>
            <person name="Chisholm R.L."/>
            <person name="Gibbs R.A."/>
            <person name="Loomis W.F."/>
            <person name="Platzer M."/>
            <person name="Kay R.R."/>
            <person name="Williams J.G."/>
            <person name="Dear P.H."/>
            <person name="Noegel A.A."/>
            <person name="Barrell B.G."/>
            <person name="Kuspa A."/>
        </authorList>
    </citation>
    <scope>NUCLEOTIDE SEQUENCE [LARGE SCALE GENOMIC DNA]</scope>
    <source>
        <strain>AX4</strain>
    </source>
</reference>
<feature type="chain" id="PRO_0000346894" description="Putative uncharacterized protein DDB_G0291089">
    <location>
        <begin position="1"/>
        <end position="82"/>
    </location>
</feature>
<organism>
    <name type="scientific">Dictyostelium discoideum</name>
    <name type="common">Social amoeba</name>
    <dbReference type="NCBI Taxonomy" id="44689"/>
    <lineage>
        <taxon>Eukaryota</taxon>
        <taxon>Amoebozoa</taxon>
        <taxon>Evosea</taxon>
        <taxon>Eumycetozoa</taxon>
        <taxon>Dictyostelia</taxon>
        <taxon>Dictyosteliales</taxon>
        <taxon>Dictyosteliaceae</taxon>
        <taxon>Dictyostelium</taxon>
    </lineage>
</organism>
<gene>
    <name type="ORF">DDB_G0291089</name>
</gene>
<sequence>MALFNSISKIGSINSKSNTLINSTMNGNAFGSNEISVLANTNVNAATNTNLSVAGITLVNAKTNTNALKFKSITKCNSCCNY</sequence>
<protein>
    <recommendedName>
        <fullName>Putative uncharacterized protein DDB_G0291089</fullName>
    </recommendedName>
</protein>
<proteinExistence type="predicted"/>
<keyword id="KW-1185">Reference proteome</keyword>